<accession>A8Z333</accession>
<dbReference type="EMBL" id="CP000730">
    <property type="protein sequence ID" value="ABX30210.1"/>
    <property type="molecule type" value="Genomic_DNA"/>
</dbReference>
<dbReference type="RefSeq" id="WP_000090796.1">
    <property type="nucleotide sequence ID" value="NC_010079.1"/>
</dbReference>
<dbReference type="SMR" id="A8Z333"/>
<dbReference type="GeneID" id="66840438"/>
<dbReference type="KEGG" id="sax:USA300HOU_2217"/>
<dbReference type="HOGENOM" id="CLU_103849_1_1_9"/>
<dbReference type="GO" id="GO:0005829">
    <property type="term" value="C:cytosol"/>
    <property type="evidence" value="ECO:0007669"/>
    <property type="project" value="TreeGrafter"/>
</dbReference>
<dbReference type="GO" id="GO:0015935">
    <property type="term" value="C:small ribosomal subunit"/>
    <property type="evidence" value="ECO:0007669"/>
    <property type="project" value="TreeGrafter"/>
</dbReference>
<dbReference type="GO" id="GO:0019843">
    <property type="term" value="F:rRNA binding"/>
    <property type="evidence" value="ECO:0007669"/>
    <property type="project" value="UniProtKB-UniRule"/>
</dbReference>
<dbReference type="GO" id="GO:0003735">
    <property type="term" value="F:structural constituent of ribosome"/>
    <property type="evidence" value="ECO:0007669"/>
    <property type="project" value="InterPro"/>
</dbReference>
<dbReference type="GO" id="GO:0000049">
    <property type="term" value="F:tRNA binding"/>
    <property type="evidence" value="ECO:0007669"/>
    <property type="project" value="UniProtKB-UniRule"/>
</dbReference>
<dbReference type="GO" id="GO:0006412">
    <property type="term" value="P:translation"/>
    <property type="evidence" value="ECO:0007669"/>
    <property type="project" value="UniProtKB-UniRule"/>
</dbReference>
<dbReference type="FunFam" id="1.10.8.50:FF:000001">
    <property type="entry name" value="30S ribosomal protein S13"/>
    <property type="match status" value="1"/>
</dbReference>
<dbReference type="FunFam" id="4.10.910.10:FF:000001">
    <property type="entry name" value="30S ribosomal protein S13"/>
    <property type="match status" value="1"/>
</dbReference>
<dbReference type="Gene3D" id="1.10.8.50">
    <property type="match status" value="1"/>
</dbReference>
<dbReference type="Gene3D" id="4.10.910.10">
    <property type="entry name" value="30s ribosomal protein s13, domain 2"/>
    <property type="match status" value="1"/>
</dbReference>
<dbReference type="HAMAP" id="MF_01315">
    <property type="entry name" value="Ribosomal_uS13"/>
    <property type="match status" value="1"/>
</dbReference>
<dbReference type="InterPro" id="IPR027437">
    <property type="entry name" value="Rbsml_uS13_C"/>
</dbReference>
<dbReference type="InterPro" id="IPR001892">
    <property type="entry name" value="Ribosomal_uS13"/>
</dbReference>
<dbReference type="InterPro" id="IPR010979">
    <property type="entry name" value="Ribosomal_uS13-like_H2TH"/>
</dbReference>
<dbReference type="InterPro" id="IPR019980">
    <property type="entry name" value="Ribosomal_uS13_bac-type"/>
</dbReference>
<dbReference type="InterPro" id="IPR018269">
    <property type="entry name" value="Ribosomal_uS13_CS"/>
</dbReference>
<dbReference type="NCBIfam" id="TIGR03631">
    <property type="entry name" value="uS13_bact"/>
    <property type="match status" value="1"/>
</dbReference>
<dbReference type="PANTHER" id="PTHR10871">
    <property type="entry name" value="30S RIBOSOMAL PROTEIN S13/40S RIBOSOMAL PROTEIN S18"/>
    <property type="match status" value="1"/>
</dbReference>
<dbReference type="PANTHER" id="PTHR10871:SF1">
    <property type="entry name" value="SMALL RIBOSOMAL SUBUNIT PROTEIN US13M"/>
    <property type="match status" value="1"/>
</dbReference>
<dbReference type="Pfam" id="PF00416">
    <property type="entry name" value="Ribosomal_S13"/>
    <property type="match status" value="1"/>
</dbReference>
<dbReference type="PIRSF" id="PIRSF002134">
    <property type="entry name" value="Ribosomal_S13"/>
    <property type="match status" value="1"/>
</dbReference>
<dbReference type="SUPFAM" id="SSF46946">
    <property type="entry name" value="S13-like H2TH domain"/>
    <property type="match status" value="1"/>
</dbReference>
<dbReference type="PROSITE" id="PS00646">
    <property type="entry name" value="RIBOSOMAL_S13_1"/>
    <property type="match status" value="1"/>
</dbReference>
<dbReference type="PROSITE" id="PS50159">
    <property type="entry name" value="RIBOSOMAL_S13_2"/>
    <property type="match status" value="1"/>
</dbReference>
<keyword id="KW-0687">Ribonucleoprotein</keyword>
<keyword id="KW-0689">Ribosomal protein</keyword>
<keyword id="KW-0694">RNA-binding</keyword>
<keyword id="KW-0699">rRNA-binding</keyword>
<keyword id="KW-0820">tRNA-binding</keyword>
<name>RS13_STAAT</name>
<organism>
    <name type="scientific">Staphylococcus aureus (strain USA300 / TCH1516)</name>
    <dbReference type="NCBI Taxonomy" id="451516"/>
    <lineage>
        <taxon>Bacteria</taxon>
        <taxon>Bacillati</taxon>
        <taxon>Bacillota</taxon>
        <taxon>Bacilli</taxon>
        <taxon>Bacillales</taxon>
        <taxon>Staphylococcaceae</taxon>
        <taxon>Staphylococcus</taxon>
    </lineage>
</organism>
<reference key="1">
    <citation type="journal article" date="2007" name="BMC Microbiol.">
        <title>Subtle genetic changes enhance virulence of methicillin resistant and sensitive Staphylococcus aureus.</title>
        <authorList>
            <person name="Highlander S.K."/>
            <person name="Hulten K.G."/>
            <person name="Qin X."/>
            <person name="Jiang H."/>
            <person name="Yerrapragada S."/>
            <person name="Mason E.O. Jr."/>
            <person name="Shang Y."/>
            <person name="Williams T.M."/>
            <person name="Fortunov R.M."/>
            <person name="Liu Y."/>
            <person name="Igboeli O."/>
            <person name="Petrosino J."/>
            <person name="Tirumalai M."/>
            <person name="Uzman A."/>
            <person name="Fox G.E."/>
            <person name="Cardenas A.M."/>
            <person name="Muzny D.M."/>
            <person name="Hemphill L."/>
            <person name="Ding Y."/>
            <person name="Dugan S."/>
            <person name="Blyth P.R."/>
            <person name="Buhay C.J."/>
            <person name="Dinh H.H."/>
            <person name="Hawes A.C."/>
            <person name="Holder M."/>
            <person name="Kovar C.L."/>
            <person name="Lee S.L."/>
            <person name="Liu W."/>
            <person name="Nazareth L.V."/>
            <person name="Wang Q."/>
            <person name="Zhou J."/>
            <person name="Kaplan S.L."/>
            <person name="Weinstock G.M."/>
        </authorList>
    </citation>
    <scope>NUCLEOTIDE SEQUENCE [LARGE SCALE GENOMIC DNA]</scope>
    <source>
        <strain>USA300 / TCH1516</strain>
    </source>
</reference>
<protein>
    <recommendedName>
        <fullName evidence="1">Small ribosomal subunit protein uS13</fullName>
    </recommendedName>
    <alternativeName>
        <fullName evidence="3">30S ribosomal protein S13</fullName>
    </alternativeName>
</protein>
<evidence type="ECO:0000255" key="1">
    <source>
        <dbReference type="HAMAP-Rule" id="MF_01315"/>
    </source>
</evidence>
<evidence type="ECO:0000256" key="2">
    <source>
        <dbReference type="SAM" id="MobiDB-lite"/>
    </source>
</evidence>
<evidence type="ECO:0000305" key="3"/>
<sequence length="121" mass="13719">MARIAGVDIPREKRVVISLTYIYGIGTSTAQKILEEANVSADTRVKDLTDDELGRIREVVDGYKVEGDLRRETNLNIKRLMEISSYRGIRHRRGLPVRGQKTKNNARTRKGPVKTVANKKK</sequence>
<proteinExistence type="inferred from homology"/>
<comment type="function">
    <text evidence="1">Located at the top of the head of the 30S subunit, it contacts several helices of the 16S rRNA. In the 70S ribosome it contacts the 23S rRNA (bridge B1a) and protein L5 of the 50S subunit (bridge B1b), connecting the 2 subunits; these bridges are implicated in subunit movement. Contacts the tRNAs in the A and P-sites.</text>
</comment>
<comment type="subunit">
    <text evidence="1">Part of the 30S ribosomal subunit. Forms a loose heterodimer with protein S19. Forms two bridges to the 50S subunit in the 70S ribosome.</text>
</comment>
<comment type="similarity">
    <text evidence="1">Belongs to the universal ribosomal protein uS13 family.</text>
</comment>
<gene>
    <name evidence="1" type="primary">rpsM</name>
    <name type="ordered locus">USA300HOU_2217</name>
</gene>
<feature type="chain" id="PRO_1000086265" description="Small ribosomal subunit protein uS13">
    <location>
        <begin position="1"/>
        <end position="121"/>
    </location>
</feature>
<feature type="region of interest" description="Disordered" evidence="2">
    <location>
        <begin position="91"/>
        <end position="121"/>
    </location>
</feature>